<feature type="chain" id="PRO_1000000852" description="Adenylosuccinate synthetase">
    <location>
        <begin position="1"/>
        <end position="429"/>
    </location>
</feature>
<feature type="active site" description="Proton acceptor" evidence="1">
    <location>
        <position position="13"/>
    </location>
</feature>
<feature type="active site" description="Proton donor" evidence="1">
    <location>
        <position position="41"/>
    </location>
</feature>
<feature type="binding site" evidence="1">
    <location>
        <begin position="12"/>
        <end position="18"/>
    </location>
    <ligand>
        <name>GTP</name>
        <dbReference type="ChEBI" id="CHEBI:37565"/>
    </ligand>
</feature>
<feature type="binding site" description="in other chain" evidence="1">
    <location>
        <begin position="13"/>
        <end position="16"/>
    </location>
    <ligand>
        <name>IMP</name>
        <dbReference type="ChEBI" id="CHEBI:58053"/>
        <note>ligand shared between dimeric partners</note>
    </ligand>
</feature>
<feature type="binding site" evidence="1">
    <location>
        <position position="13"/>
    </location>
    <ligand>
        <name>Mg(2+)</name>
        <dbReference type="ChEBI" id="CHEBI:18420"/>
    </ligand>
</feature>
<feature type="binding site" description="in other chain" evidence="1">
    <location>
        <begin position="38"/>
        <end position="41"/>
    </location>
    <ligand>
        <name>IMP</name>
        <dbReference type="ChEBI" id="CHEBI:58053"/>
        <note>ligand shared between dimeric partners</note>
    </ligand>
</feature>
<feature type="binding site" evidence="1">
    <location>
        <begin position="40"/>
        <end position="42"/>
    </location>
    <ligand>
        <name>GTP</name>
        <dbReference type="ChEBI" id="CHEBI:37565"/>
    </ligand>
</feature>
<feature type="binding site" evidence="1">
    <location>
        <position position="40"/>
    </location>
    <ligand>
        <name>Mg(2+)</name>
        <dbReference type="ChEBI" id="CHEBI:18420"/>
    </ligand>
</feature>
<feature type="binding site" description="in other chain" evidence="1">
    <location>
        <position position="129"/>
    </location>
    <ligand>
        <name>IMP</name>
        <dbReference type="ChEBI" id="CHEBI:58053"/>
        <note>ligand shared between dimeric partners</note>
    </ligand>
</feature>
<feature type="binding site" evidence="1">
    <location>
        <position position="143"/>
    </location>
    <ligand>
        <name>IMP</name>
        <dbReference type="ChEBI" id="CHEBI:58053"/>
        <note>ligand shared between dimeric partners</note>
    </ligand>
</feature>
<feature type="binding site" description="in other chain" evidence="1">
    <location>
        <position position="223"/>
    </location>
    <ligand>
        <name>IMP</name>
        <dbReference type="ChEBI" id="CHEBI:58053"/>
        <note>ligand shared between dimeric partners</note>
    </ligand>
</feature>
<feature type="binding site" description="in other chain" evidence="1">
    <location>
        <position position="238"/>
    </location>
    <ligand>
        <name>IMP</name>
        <dbReference type="ChEBI" id="CHEBI:58053"/>
        <note>ligand shared between dimeric partners</note>
    </ligand>
</feature>
<feature type="binding site" evidence="1">
    <location>
        <begin position="298"/>
        <end position="304"/>
    </location>
    <ligand>
        <name>substrate</name>
    </ligand>
</feature>
<feature type="binding site" description="in other chain" evidence="1">
    <location>
        <position position="302"/>
    </location>
    <ligand>
        <name>IMP</name>
        <dbReference type="ChEBI" id="CHEBI:58053"/>
        <note>ligand shared between dimeric partners</note>
    </ligand>
</feature>
<feature type="binding site" evidence="1">
    <location>
        <position position="304"/>
    </location>
    <ligand>
        <name>GTP</name>
        <dbReference type="ChEBI" id="CHEBI:37565"/>
    </ligand>
</feature>
<feature type="binding site" evidence="1">
    <location>
        <begin position="330"/>
        <end position="332"/>
    </location>
    <ligand>
        <name>GTP</name>
        <dbReference type="ChEBI" id="CHEBI:37565"/>
    </ligand>
</feature>
<feature type="binding site" evidence="1">
    <location>
        <begin position="412"/>
        <end position="414"/>
    </location>
    <ligand>
        <name>GTP</name>
        <dbReference type="ChEBI" id="CHEBI:37565"/>
    </ligand>
</feature>
<evidence type="ECO:0000255" key="1">
    <source>
        <dbReference type="HAMAP-Rule" id="MF_00011"/>
    </source>
</evidence>
<accession>Q2W2D1</accession>
<name>PURA_PARM1</name>
<organism>
    <name type="scientific">Paramagnetospirillum magneticum (strain ATCC 700264 / AMB-1)</name>
    <name type="common">Magnetospirillum magneticum</name>
    <dbReference type="NCBI Taxonomy" id="342108"/>
    <lineage>
        <taxon>Bacteria</taxon>
        <taxon>Pseudomonadati</taxon>
        <taxon>Pseudomonadota</taxon>
        <taxon>Alphaproteobacteria</taxon>
        <taxon>Rhodospirillales</taxon>
        <taxon>Magnetospirillaceae</taxon>
        <taxon>Paramagnetospirillum</taxon>
    </lineage>
</organism>
<gene>
    <name evidence="1" type="primary">purA</name>
    <name type="ordered locus">amb3190</name>
</gene>
<proteinExistence type="inferred from homology"/>
<keyword id="KW-0963">Cytoplasm</keyword>
<keyword id="KW-0342">GTP-binding</keyword>
<keyword id="KW-0436">Ligase</keyword>
<keyword id="KW-0460">Magnesium</keyword>
<keyword id="KW-0479">Metal-binding</keyword>
<keyword id="KW-0547">Nucleotide-binding</keyword>
<keyword id="KW-0658">Purine biosynthesis</keyword>
<protein>
    <recommendedName>
        <fullName evidence="1">Adenylosuccinate synthetase</fullName>
        <shortName evidence="1">AMPSase</shortName>
        <shortName evidence="1">AdSS</shortName>
        <ecNumber evidence="1">6.3.4.4</ecNumber>
    </recommendedName>
    <alternativeName>
        <fullName evidence="1">IMP--aspartate ligase</fullName>
    </alternativeName>
</protein>
<dbReference type="EC" id="6.3.4.4" evidence="1"/>
<dbReference type="EMBL" id="AP007255">
    <property type="protein sequence ID" value="BAE51994.1"/>
    <property type="molecule type" value="Genomic_DNA"/>
</dbReference>
<dbReference type="RefSeq" id="WP_011385555.1">
    <property type="nucleotide sequence ID" value="NC_007626.1"/>
</dbReference>
<dbReference type="SMR" id="Q2W2D1"/>
<dbReference type="STRING" id="342108.amb3190"/>
<dbReference type="KEGG" id="mag:amb3190"/>
<dbReference type="HOGENOM" id="CLU_029848_0_0_5"/>
<dbReference type="OrthoDB" id="9807553at2"/>
<dbReference type="UniPathway" id="UPA00075">
    <property type="reaction ID" value="UER00335"/>
</dbReference>
<dbReference type="Proteomes" id="UP000007058">
    <property type="component" value="Chromosome"/>
</dbReference>
<dbReference type="GO" id="GO:0005737">
    <property type="term" value="C:cytoplasm"/>
    <property type="evidence" value="ECO:0007669"/>
    <property type="project" value="UniProtKB-SubCell"/>
</dbReference>
<dbReference type="GO" id="GO:0004019">
    <property type="term" value="F:adenylosuccinate synthase activity"/>
    <property type="evidence" value="ECO:0007669"/>
    <property type="project" value="UniProtKB-UniRule"/>
</dbReference>
<dbReference type="GO" id="GO:0005525">
    <property type="term" value="F:GTP binding"/>
    <property type="evidence" value="ECO:0007669"/>
    <property type="project" value="UniProtKB-UniRule"/>
</dbReference>
<dbReference type="GO" id="GO:0000287">
    <property type="term" value="F:magnesium ion binding"/>
    <property type="evidence" value="ECO:0007669"/>
    <property type="project" value="UniProtKB-UniRule"/>
</dbReference>
<dbReference type="GO" id="GO:0044208">
    <property type="term" value="P:'de novo' AMP biosynthetic process"/>
    <property type="evidence" value="ECO:0007669"/>
    <property type="project" value="UniProtKB-UniRule"/>
</dbReference>
<dbReference type="GO" id="GO:0046040">
    <property type="term" value="P:IMP metabolic process"/>
    <property type="evidence" value="ECO:0007669"/>
    <property type="project" value="TreeGrafter"/>
</dbReference>
<dbReference type="CDD" id="cd03108">
    <property type="entry name" value="AdSS"/>
    <property type="match status" value="1"/>
</dbReference>
<dbReference type="FunFam" id="1.10.300.10:FF:000001">
    <property type="entry name" value="Adenylosuccinate synthetase"/>
    <property type="match status" value="1"/>
</dbReference>
<dbReference type="FunFam" id="3.90.170.10:FF:000001">
    <property type="entry name" value="Adenylosuccinate synthetase"/>
    <property type="match status" value="1"/>
</dbReference>
<dbReference type="Gene3D" id="3.40.440.10">
    <property type="entry name" value="Adenylosuccinate Synthetase, subunit A, domain 1"/>
    <property type="match status" value="1"/>
</dbReference>
<dbReference type="Gene3D" id="1.10.300.10">
    <property type="entry name" value="Adenylosuccinate Synthetase, subunit A, domain 2"/>
    <property type="match status" value="1"/>
</dbReference>
<dbReference type="Gene3D" id="3.90.170.10">
    <property type="entry name" value="Adenylosuccinate Synthetase, subunit A, domain 3"/>
    <property type="match status" value="1"/>
</dbReference>
<dbReference type="HAMAP" id="MF_00011">
    <property type="entry name" value="Adenylosucc_synth"/>
    <property type="match status" value="1"/>
</dbReference>
<dbReference type="InterPro" id="IPR018220">
    <property type="entry name" value="Adenylosuccin_syn_GTP-bd"/>
</dbReference>
<dbReference type="InterPro" id="IPR042109">
    <property type="entry name" value="Adenylosuccinate_synth_dom1"/>
</dbReference>
<dbReference type="InterPro" id="IPR042110">
    <property type="entry name" value="Adenylosuccinate_synth_dom2"/>
</dbReference>
<dbReference type="InterPro" id="IPR042111">
    <property type="entry name" value="Adenylosuccinate_synth_dom3"/>
</dbReference>
<dbReference type="InterPro" id="IPR001114">
    <property type="entry name" value="Adenylosuccinate_synthetase"/>
</dbReference>
<dbReference type="InterPro" id="IPR027417">
    <property type="entry name" value="P-loop_NTPase"/>
</dbReference>
<dbReference type="NCBIfam" id="NF002223">
    <property type="entry name" value="PRK01117.1"/>
    <property type="match status" value="1"/>
</dbReference>
<dbReference type="NCBIfam" id="TIGR00184">
    <property type="entry name" value="purA"/>
    <property type="match status" value="1"/>
</dbReference>
<dbReference type="PANTHER" id="PTHR11846">
    <property type="entry name" value="ADENYLOSUCCINATE SYNTHETASE"/>
    <property type="match status" value="1"/>
</dbReference>
<dbReference type="PANTHER" id="PTHR11846:SF0">
    <property type="entry name" value="ADENYLOSUCCINATE SYNTHETASE"/>
    <property type="match status" value="1"/>
</dbReference>
<dbReference type="Pfam" id="PF00709">
    <property type="entry name" value="Adenylsucc_synt"/>
    <property type="match status" value="1"/>
</dbReference>
<dbReference type="SMART" id="SM00788">
    <property type="entry name" value="Adenylsucc_synt"/>
    <property type="match status" value="1"/>
</dbReference>
<dbReference type="SUPFAM" id="SSF52540">
    <property type="entry name" value="P-loop containing nucleoside triphosphate hydrolases"/>
    <property type="match status" value="1"/>
</dbReference>
<dbReference type="PROSITE" id="PS01266">
    <property type="entry name" value="ADENYLOSUCCIN_SYN_1"/>
    <property type="match status" value="1"/>
</dbReference>
<comment type="function">
    <text evidence="1">Plays an important role in the de novo pathway of purine nucleotide biosynthesis. Catalyzes the first committed step in the biosynthesis of AMP from IMP.</text>
</comment>
<comment type="catalytic activity">
    <reaction evidence="1">
        <text>IMP + L-aspartate + GTP = N(6)-(1,2-dicarboxyethyl)-AMP + GDP + phosphate + 2 H(+)</text>
        <dbReference type="Rhea" id="RHEA:15753"/>
        <dbReference type="ChEBI" id="CHEBI:15378"/>
        <dbReference type="ChEBI" id="CHEBI:29991"/>
        <dbReference type="ChEBI" id="CHEBI:37565"/>
        <dbReference type="ChEBI" id="CHEBI:43474"/>
        <dbReference type="ChEBI" id="CHEBI:57567"/>
        <dbReference type="ChEBI" id="CHEBI:58053"/>
        <dbReference type="ChEBI" id="CHEBI:58189"/>
        <dbReference type="EC" id="6.3.4.4"/>
    </reaction>
</comment>
<comment type="cofactor">
    <cofactor evidence="1">
        <name>Mg(2+)</name>
        <dbReference type="ChEBI" id="CHEBI:18420"/>
    </cofactor>
    <text evidence="1">Binds 1 Mg(2+) ion per subunit.</text>
</comment>
<comment type="pathway">
    <text evidence="1">Purine metabolism; AMP biosynthesis via de novo pathway; AMP from IMP: step 1/2.</text>
</comment>
<comment type="subunit">
    <text evidence="1">Homodimer.</text>
</comment>
<comment type="subcellular location">
    <subcellularLocation>
        <location evidence="1">Cytoplasm</location>
    </subcellularLocation>
</comment>
<comment type="similarity">
    <text evidence="1">Belongs to the adenylosuccinate synthetase family.</text>
</comment>
<reference key="1">
    <citation type="journal article" date="2005" name="DNA Res.">
        <title>Complete genome sequence of the facultative anaerobic magnetotactic bacterium Magnetospirillum sp. strain AMB-1.</title>
        <authorList>
            <person name="Matsunaga T."/>
            <person name="Okamura Y."/>
            <person name="Fukuda Y."/>
            <person name="Wahyudi A.T."/>
            <person name="Murase Y."/>
            <person name="Takeyama H."/>
        </authorList>
    </citation>
    <scope>NUCLEOTIDE SEQUENCE [LARGE SCALE GENOMIC DNA]</scope>
    <source>
        <strain>ATCC 700264 / AMB-1</strain>
    </source>
</reference>
<sequence>MANVAVVGAQWGDEGKGKVVDWLSERADVVVRFQGGHNAGHTLVINGVTYKLSLLPSGVVRGKLSIIGNGVVIDPWALLAEIERIRAQGVEITPEVLKIAENACLILPLHAHLDKAREEASGTAKIGTTGRGIGPAYEDRVGRRAIRVCDLADEAVLKAKIATLLRHHNALLRGLGAAEVDGAELLAKLLDVAPKILPFADVVWQHLDEVRHTRKRVLFEGAQGAMLDVDHGTYPYVTSSNTVSGNAGTGSGVGPGQVGYVLGICKAYTTRVGEGPFPTELFDEIGKSIGERGHEFGTVTGRPRRCGWFDAVMVRQAVKVGGITGIALTKLDVLDGFKELKICTGYKLDGKVINHFPASMTGQANVEPIYEVIEGWSQSTRGVRSWKDLPATAIKYIRRIEELIEAPVALLSTSPEREDSILVHDPFAT</sequence>